<sequence>MAEKYVIAIDEGTTSARAIVFDKELNILGIGQNEFTQYYPQPGYVEHSPEEIWQAQLLAINKALEKAKIDRNNILSIGITNQRETTVMWDTRTGKPIYNAIVWQDRRTAPITDYLKANYLRLIKDRTGLVPDPYFSASKIKWILDNIPNAREKAEKGEIKFGTIDTYLIWKLTNGKAHVTDYSNASRTMLFNIRKLEWDREILEILNIPEAILPDVKPSSEIYGYAEILNSSIPISGDAGDQQAALFGQIAFNQGDVKCTYGTGSFILLNTGSNLVSSNDLLTTIAWGVGKGITYALEGSIFITGAAVQWFRDGLRAIDVSDEIEPLAGSVPDNGGVYFVPAFTGLGAPYWDPYARGLIIGITRGTTKAHIARAILESMAYQTMDVLGIMQRDSGIKIDALKVDGGASKNDLLMQFQADILKMKVVRPKIMETTSMGVAMLAGLSVGYWNSMDELKQKWKIDQVFEPKMDDEYREKLYSGWKEAVRRALGWAKTIGG</sequence>
<proteinExistence type="inferred from homology"/>
<reference key="1">
    <citation type="journal article" date="2005" name="J. Bacteriol.">
        <title>The genome of Sulfolobus acidocaldarius, a model organism of the Crenarchaeota.</title>
        <authorList>
            <person name="Chen L."/>
            <person name="Bruegger K."/>
            <person name="Skovgaard M."/>
            <person name="Redder P."/>
            <person name="She Q."/>
            <person name="Torarinsson E."/>
            <person name="Greve B."/>
            <person name="Awayez M."/>
            <person name="Zibat A."/>
            <person name="Klenk H.-P."/>
            <person name="Garrett R.A."/>
        </authorList>
    </citation>
    <scope>NUCLEOTIDE SEQUENCE [LARGE SCALE GENOMIC DNA]</scope>
    <source>
        <strain>ATCC 33909 / DSM 639 / JCM 8929 / NBRC 15157 / NCIMB 11770</strain>
    </source>
</reference>
<organism>
    <name type="scientific">Sulfolobus acidocaldarius (strain ATCC 33909 / DSM 639 / JCM 8929 / NBRC 15157 / NCIMB 11770)</name>
    <dbReference type="NCBI Taxonomy" id="330779"/>
    <lineage>
        <taxon>Archaea</taxon>
        <taxon>Thermoproteota</taxon>
        <taxon>Thermoprotei</taxon>
        <taxon>Sulfolobales</taxon>
        <taxon>Sulfolobaceae</taxon>
        <taxon>Sulfolobus</taxon>
    </lineage>
</organism>
<evidence type="ECO:0000255" key="1">
    <source>
        <dbReference type="HAMAP-Rule" id="MF_00186"/>
    </source>
</evidence>
<dbReference type="EC" id="2.7.1.30" evidence="1"/>
<dbReference type="EMBL" id="CP000077">
    <property type="protein sequence ID" value="AAY81329.1"/>
    <property type="molecule type" value="Genomic_DNA"/>
</dbReference>
<dbReference type="RefSeq" id="WP_011278831.1">
    <property type="nucleotide sequence ID" value="NC_007181.1"/>
</dbReference>
<dbReference type="SMR" id="Q4J7A3"/>
<dbReference type="STRING" id="330779.Saci_2033"/>
<dbReference type="GeneID" id="14552550"/>
<dbReference type="GeneID" id="3474450"/>
<dbReference type="KEGG" id="sai:Saci_2033"/>
<dbReference type="PATRIC" id="fig|330779.12.peg.2032"/>
<dbReference type="eggNOG" id="arCOG00024">
    <property type="taxonomic scope" value="Archaea"/>
</dbReference>
<dbReference type="HOGENOM" id="CLU_009281_2_3_2"/>
<dbReference type="UniPathway" id="UPA00618">
    <property type="reaction ID" value="UER00672"/>
</dbReference>
<dbReference type="Proteomes" id="UP000001018">
    <property type="component" value="Chromosome"/>
</dbReference>
<dbReference type="GO" id="GO:0005829">
    <property type="term" value="C:cytosol"/>
    <property type="evidence" value="ECO:0007669"/>
    <property type="project" value="TreeGrafter"/>
</dbReference>
<dbReference type="GO" id="GO:0005524">
    <property type="term" value="F:ATP binding"/>
    <property type="evidence" value="ECO:0007669"/>
    <property type="project" value="UniProtKB-UniRule"/>
</dbReference>
<dbReference type="GO" id="GO:0004370">
    <property type="term" value="F:glycerol kinase activity"/>
    <property type="evidence" value="ECO:0000250"/>
    <property type="project" value="UniProtKB"/>
</dbReference>
<dbReference type="GO" id="GO:0019563">
    <property type="term" value="P:glycerol catabolic process"/>
    <property type="evidence" value="ECO:0007669"/>
    <property type="project" value="UniProtKB-UniRule"/>
</dbReference>
<dbReference type="GO" id="GO:0006071">
    <property type="term" value="P:glycerol metabolic process"/>
    <property type="evidence" value="ECO:0000250"/>
    <property type="project" value="UniProtKB"/>
</dbReference>
<dbReference type="GO" id="GO:0006072">
    <property type="term" value="P:glycerol-3-phosphate metabolic process"/>
    <property type="evidence" value="ECO:0007669"/>
    <property type="project" value="InterPro"/>
</dbReference>
<dbReference type="CDD" id="cd07786">
    <property type="entry name" value="FGGY_EcGK_like"/>
    <property type="match status" value="1"/>
</dbReference>
<dbReference type="FunFam" id="3.30.420.40:FF:000007">
    <property type="entry name" value="Glycerol kinase"/>
    <property type="match status" value="1"/>
</dbReference>
<dbReference type="FunFam" id="3.30.420.40:FF:000008">
    <property type="entry name" value="Glycerol kinase"/>
    <property type="match status" value="1"/>
</dbReference>
<dbReference type="Gene3D" id="3.30.420.40">
    <property type="match status" value="2"/>
</dbReference>
<dbReference type="HAMAP" id="MF_00186">
    <property type="entry name" value="Glycerol_kin"/>
    <property type="match status" value="1"/>
</dbReference>
<dbReference type="InterPro" id="IPR043129">
    <property type="entry name" value="ATPase_NBD"/>
</dbReference>
<dbReference type="InterPro" id="IPR000577">
    <property type="entry name" value="Carb_kinase_FGGY"/>
</dbReference>
<dbReference type="InterPro" id="IPR018483">
    <property type="entry name" value="Carb_kinase_FGGY_CS"/>
</dbReference>
<dbReference type="InterPro" id="IPR018485">
    <property type="entry name" value="FGGY_C"/>
</dbReference>
<dbReference type="InterPro" id="IPR018484">
    <property type="entry name" value="FGGY_N"/>
</dbReference>
<dbReference type="InterPro" id="IPR005999">
    <property type="entry name" value="Glycerol_kin"/>
</dbReference>
<dbReference type="NCBIfam" id="TIGR01311">
    <property type="entry name" value="glycerol_kin"/>
    <property type="match status" value="1"/>
</dbReference>
<dbReference type="NCBIfam" id="NF000756">
    <property type="entry name" value="PRK00047.1"/>
    <property type="match status" value="1"/>
</dbReference>
<dbReference type="PANTHER" id="PTHR10196:SF69">
    <property type="entry name" value="GLYCEROL KINASE"/>
    <property type="match status" value="1"/>
</dbReference>
<dbReference type="PANTHER" id="PTHR10196">
    <property type="entry name" value="SUGAR KINASE"/>
    <property type="match status" value="1"/>
</dbReference>
<dbReference type="Pfam" id="PF02782">
    <property type="entry name" value="FGGY_C"/>
    <property type="match status" value="1"/>
</dbReference>
<dbReference type="Pfam" id="PF00370">
    <property type="entry name" value="FGGY_N"/>
    <property type="match status" value="1"/>
</dbReference>
<dbReference type="PIRSF" id="PIRSF000538">
    <property type="entry name" value="GlpK"/>
    <property type="match status" value="1"/>
</dbReference>
<dbReference type="SUPFAM" id="SSF53067">
    <property type="entry name" value="Actin-like ATPase domain"/>
    <property type="match status" value="2"/>
</dbReference>
<dbReference type="PROSITE" id="PS00933">
    <property type="entry name" value="FGGY_KINASES_1"/>
    <property type="match status" value="1"/>
</dbReference>
<dbReference type="PROSITE" id="PS00445">
    <property type="entry name" value="FGGY_KINASES_2"/>
    <property type="match status" value="1"/>
</dbReference>
<comment type="function">
    <text evidence="1">Key enzyme in the regulation of glycerol uptake and metabolism. Catalyzes the phosphorylation of glycerol to yield sn-glycerol 3-phosphate.</text>
</comment>
<comment type="catalytic activity">
    <reaction evidence="1">
        <text>glycerol + ATP = sn-glycerol 3-phosphate + ADP + H(+)</text>
        <dbReference type="Rhea" id="RHEA:21644"/>
        <dbReference type="ChEBI" id="CHEBI:15378"/>
        <dbReference type="ChEBI" id="CHEBI:17754"/>
        <dbReference type="ChEBI" id="CHEBI:30616"/>
        <dbReference type="ChEBI" id="CHEBI:57597"/>
        <dbReference type="ChEBI" id="CHEBI:456216"/>
        <dbReference type="EC" id="2.7.1.30"/>
    </reaction>
</comment>
<comment type="pathway">
    <text evidence="1">Polyol metabolism; glycerol degradation via glycerol kinase pathway; sn-glycerol 3-phosphate from glycerol: step 1/1.</text>
</comment>
<comment type="similarity">
    <text evidence="1">Belongs to the FGGY kinase family.</text>
</comment>
<protein>
    <recommendedName>
        <fullName evidence="1">Glycerol kinase 2</fullName>
        <ecNumber evidence="1">2.7.1.30</ecNumber>
    </recommendedName>
    <alternativeName>
        <fullName evidence="1">ATP:glycerol 3-phosphotransferase 2</fullName>
    </alternativeName>
    <alternativeName>
        <fullName evidence="1">Glycerokinase 2</fullName>
        <shortName evidence="1">GK 2</shortName>
    </alternativeName>
</protein>
<accession>Q4J7A3</accession>
<name>GLPK2_SULAC</name>
<gene>
    <name evidence="1" type="primary">glpK2</name>
    <name type="ordered locus">Saci_2033</name>
</gene>
<feature type="chain" id="PRO_0000059532" description="Glycerol kinase 2">
    <location>
        <begin position="1"/>
        <end position="497"/>
    </location>
</feature>
<feature type="binding site" evidence="1">
    <location>
        <position position="13"/>
    </location>
    <ligand>
        <name>ADP</name>
        <dbReference type="ChEBI" id="CHEBI:456216"/>
    </ligand>
</feature>
<feature type="binding site" evidence="1">
    <location>
        <position position="13"/>
    </location>
    <ligand>
        <name>ATP</name>
        <dbReference type="ChEBI" id="CHEBI:30616"/>
    </ligand>
</feature>
<feature type="binding site" evidence="1">
    <location>
        <position position="13"/>
    </location>
    <ligand>
        <name>sn-glycerol 3-phosphate</name>
        <dbReference type="ChEBI" id="CHEBI:57597"/>
    </ligand>
</feature>
<feature type="binding site" evidence="1">
    <location>
        <position position="14"/>
    </location>
    <ligand>
        <name>ATP</name>
        <dbReference type="ChEBI" id="CHEBI:30616"/>
    </ligand>
</feature>
<feature type="binding site" evidence="1">
    <location>
        <position position="15"/>
    </location>
    <ligand>
        <name>ATP</name>
        <dbReference type="ChEBI" id="CHEBI:30616"/>
    </ligand>
</feature>
<feature type="binding site" evidence="1">
    <location>
        <position position="17"/>
    </location>
    <ligand>
        <name>ADP</name>
        <dbReference type="ChEBI" id="CHEBI:456216"/>
    </ligand>
</feature>
<feature type="binding site" evidence="1">
    <location>
        <position position="83"/>
    </location>
    <ligand>
        <name>glycerol</name>
        <dbReference type="ChEBI" id="CHEBI:17754"/>
    </ligand>
</feature>
<feature type="binding site" evidence="1">
    <location>
        <position position="83"/>
    </location>
    <ligand>
        <name>sn-glycerol 3-phosphate</name>
        <dbReference type="ChEBI" id="CHEBI:57597"/>
    </ligand>
</feature>
<feature type="binding site" evidence="1">
    <location>
        <position position="84"/>
    </location>
    <ligand>
        <name>glycerol</name>
        <dbReference type="ChEBI" id="CHEBI:17754"/>
    </ligand>
</feature>
<feature type="binding site" evidence="1">
    <location>
        <position position="84"/>
    </location>
    <ligand>
        <name>sn-glycerol 3-phosphate</name>
        <dbReference type="ChEBI" id="CHEBI:57597"/>
    </ligand>
</feature>
<feature type="binding site" evidence="1">
    <location>
        <position position="134"/>
    </location>
    <ligand>
        <name>glycerol</name>
        <dbReference type="ChEBI" id="CHEBI:17754"/>
    </ligand>
</feature>
<feature type="binding site" evidence="1">
    <location>
        <position position="134"/>
    </location>
    <ligand>
        <name>sn-glycerol 3-phosphate</name>
        <dbReference type="ChEBI" id="CHEBI:57597"/>
    </ligand>
</feature>
<feature type="binding site" evidence="1">
    <location>
        <position position="241"/>
    </location>
    <ligand>
        <name>glycerol</name>
        <dbReference type="ChEBI" id="CHEBI:17754"/>
    </ligand>
</feature>
<feature type="binding site" evidence="1">
    <location>
        <position position="241"/>
    </location>
    <ligand>
        <name>sn-glycerol 3-phosphate</name>
        <dbReference type="ChEBI" id="CHEBI:57597"/>
    </ligand>
</feature>
<feature type="binding site" evidence="1">
    <location>
        <position position="242"/>
    </location>
    <ligand>
        <name>glycerol</name>
        <dbReference type="ChEBI" id="CHEBI:17754"/>
    </ligand>
</feature>
<feature type="binding site" evidence="1">
    <location>
        <position position="263"/>
    </location>
    <ligand>
        <name>ADP</name>
        <dbReference type="ChEBI" id="CHEBI:456216"/>
    </ligand>
</feature>
<feature type="binding site" evidence="1">
    <location>
        <position position="263"/>
    </location>
    <ligand>
        <name>ATP</name>
        <dbReference type="ChEBI" id="CHEBI:30616"/>
    </ligand>
</feature>
<feature type="binding site" evidence="1">
    <location>
        <position position="305"/>
    </location>
    <ligand>
        <name>ADP</name>
        <dbReference type="ChEBI" id="CHEBI:456216"/>
    </ligand>
</feature>
<feature type="binding site" evidence="1">
    <location>
        <position position="305"/>
    </location>
    <ligand>
        <name>ATP</name>
        <dbReference type="ChEBI" id="CHEBI:30616"/>
    </ligand>
</feature>
<feature type="binding site" evidence="1">
    <location>
        <position position="309"/>
    </location>
    <ligand>
        <name>ATP</name>
        <dbReference type="ChEBI" id="CHEBI:30616"/>
    </ligand>
</feature>
<feature type="binding site" evidence="1">
    <location>
        <position position="406"/>
    </location>
    <ligand>
        <name>ADP</name>
        <dbReference type="ChEBI" id="CHEBI:456216"/>
    </ligand>
</feature>
<feature type="binding site" evidence="1">
    <location>
        <position position="406"/>
    </location>
    <ligand>
        <name>ATP</name>
        <dbReference type="ChEBI" id="CHEBI:30616"/>
    </ligand>
</feature>
<feature type="binding site" evidence="1">
    <location>
        <position position="410"/>
    </location>
    <ligand>
        <name>ADP</name>
        <dbReference type="ChEBI" id="CHEBI:456216"/>
    </ligand>
</feature>
<keyword id="KW-0067">ATP-binding</keyword>
<keyword id="KW-0319">Glycerol metabolism</keyword>
<keyword id="KW-0418">Kinase</keyword>
<keyword id="KW-0547">Nucleotide-binding</keyword>
<keyword id="KW-1185">Reference proteome</keyword>
<keyword id="KW-0808">Transferase</keyword>